<comment type="function">
    <text evidence="1">Catalyzes the reversible cyclization of carbamoyl aspartate to dihydroorotate.</text>
</comment>
<comment type="catalytic activity">
    <reaction evidence="1">
        <text>(S)-dihydroorotate + H2O = N-carbamoyl-L-aspartate + H(+)</text>
        <dbReference type="Rhea" id="RHEA:24296"/>
        <dbReference type="ChEBI" id="CHEBI:15377"/>
        <dbReference type="ChEBI" id="CHEBI:15378"/>
        <dbReference type="ChEBI" id="CHEBI:30864"/>
        <dbReference type="ChEBI" id="CHEBI:32814"/>
        <dbReference type="EC" id="3.5.2.3"/>
    </reaction>
</comment>
<comment type="cofactor">
    <cofactor evidence="1">
        <name>Zn(2+)</name>
        <dbReference type="ChEBI" id="CHEBI:29105"/>
    </cofactor>
    <text evidence="1">Binds 2 Zn(2+) ions per subunit.</text>
</comment>
<comment type="pathway">
    <text evidence="1">Pyrimidine metabolism; UMP biosynthesis via de novo pathway; (S)-dihydroorotate from bicarbonate: step 3/3.</text>
</comment>
<comment type="subunit">
    <text evidence="1">Homodimer.</text>
</comment>
<comment type="similarity">
    <text evidence="1">Belongs to the metallo-dependent hydrolases superfamily. DHOase family. Class II DHOase subfamily.</text>
</comment>
<proteinExistence type="inferred from homology"/>
<sequence length="345" mass="37950">MKSLTLRRPDDWHLHLRDGAMLEGVIGDTSRHFARAIIMPNLVPPVVTTADASAYRERILKAIPEGDRFEPLMTLYLTEDTVADDVEEGKKSGLITAVKLYPAGATTNSHGGVRDFNKAMPVLERMAKIGLPLCVHGEVTTPDVDIFDREKAFIDTVLEPLRQRLPELKVTMEHITTRDGVDYIKSSNANLAGSITTHHLIINRNAILVGGIKPHYYCLPVAKREEHRLALRAAATSGDARFFLGTDSAPHVDPLKECACGCAGIYTSINTMSCLAHVFEDENALDKLEAFASLNGPAWYGLAPNDETITLVKREEAVAFPEKIETGAGPVTVFDPMFPLHWDVN</sequence>
<accession>Q8UI99</accession>
<keyword id="KW-0378">Hydrolase</keyword>
<keyword id="KW-0479">Metal-binding</keyword>
<keyword id="KW-0665">Pyrimidine biosynthesis</keyword>
<keyword id="KW-1185">Reference proteome</keyword>
<keyword id="KW-0862">Zinc</keyword>
<protein>
    <recommendedName>
        <fullName evidence="1">Dihydroorotase</fullName>
        <shortName evidence="1">DHOase</shortName>
        <ecNumber evidence="1">3.5.2.3</ecNumber>
    </recommendedName>
</protein>
<name>PYRC_AGRFC</name>
<organism>
    <name type="scientific">Agrobacterium fabrum (strain C58 / ATCC 33970)</name>
    <name type="common">Agrobacterium tumefaciens (strain C58)</name>
    <dbReference type="NCBI Taxonomy" id="176299"/>
    <lineage>
        <taxon>Bacteria</taxon>
        <taxon>Pseudomonadati</taxon>
        <taxon>Pseudomonadota</taxon>
        <taxon>Alphaproteobacteria</taxon>
        <taxon>Hyphomicrobiales</taxon>
        <taxon>Rhizobiaceae</taxon>
        <taxon>Rhizobium/Agrobacterium group</taxon>
        <taxon>Agrobacterium</taxon>
        <taxon>Agrobacterium tumefaciens complex</taxon>
    </lineage>
</organism>
<dbReference type="EC" id="3.5.2.3" evidence="1"/>
<dbReference type="EMBL" id="AE007869">
    <property type="protein sequence ID" value="AAK86214.2"/>
    <property type="molecule type" value="Genomic_DNA"/>
</dbReference>
<dbReference type="PIR" id="AF2625">
    <property type="entry name" value="AF2625"/>
</dbReference>
<dbReference type="PIR" id="E97407">
    <property type="entry name" value="E97407"/>
</dbReference>
<dbReference type="RefSeq" id="NP_353429.2">
    <property type="nucleotide sequence ID" value="NC_003062.2"/>
</dbReference>
<dbReference type="RefSeq" id="WP_010970870.1">
    <property type="nucleotide sequence ID" value="NC_003062.2"/>
</dbReference>
<dbReference type="SMR" id="Q8UI99"/>
<dbReference type="STRING" id="176299.Atu0399"/>
<dbReference type="MEROPS" id="M38.A02"/>
<dbReference type="EnsemblBacteria" id="AAK86214">
    <property type="protein sequence ID" value="AAK86214"/>
    <property type="gene ID" value="Atu0399"/>
</dbReference>
<dbReference type="GeneID" id="1132437"/>
<dbReference type="KEGG" id="atu:Atu0399"/>
<dbReference type="PATRIC" id="fig|176299.10.peg.390"/>
<dbReference type="eggNOG" id="COG0418">
    <property type="taxonomic scope" value="Bacteria"/>
</dbReference>
<dbReference type="HOGENOM" id="CLU_041558_1_0_5"/>
<dbReference type="OrthoDB" id="9808095at2"/>
<dbReference type="PhylomeDB" id="Q8UI99"/>
<dbReference type="UniPathway" id="UPA00070">
    <property type="reaction ID" value="UER00117"/>
</dbReference>
<dbReference type="Proteomes" id="UP000000813">
    <property type="component" value="Chromosome circular"/>
</dbReference>
<dbReference type="GO" id="GO:0005829">
    <property type="term" value="C:cytosol"/>
    <property type="evidence" value="ECO:0007669"/>
    <property type="project" value="TreeGrafter"/>
</dbReference>
<dbReference type="GO" id="GO:0004151">
    <property type="term" value="F:dihydroorotase activity"/>
    <property type="evidence" value="ECO:0007669"/>
    <property type="project" value="UniProtKB-UniRule"/>
</dbReference>
<dbReference type="GO" id="GO:0008270">
    <property type="term" value="F:zinc ion binding"/>
    <property type="evidence" value="ECO:0007669"/>
    <property type="project" value="UniProtKB-UniRule"/>
</dbReference>
<dbReference type="GO" id="GO:0006207">
    <property type="term" value="P:'de novo' pyrimidine nucleobase biosynthetic process"/>
    <property type="evidence" value="ECO:0007669"/>
    <property type="project" value="TreeGrafter"/>
</dbReference>
<dbReference type="GO" id="GO:0044205">
    <property type="term" value="P:'de novo' UMP biosynthetic process"/>
    <property type="evidence" value="ECO:0007669"/>
    <property type="project" value="UniProtKB-UniRule"/>
</dbReference>
<dbReference type="CDD" id="cd01294">
    <property type="entry name" value="DHOase"/>
    <property type="match status" value="1"/>
</dbReference>
<dbReference type="Gene3D" id="3.20.20.140">
    <property type="entry name" value="Metal-dependent hydrolases"/>
    <property type="match status" value="1"/>
</dbReference>
<dbReference type="HAMAP" id="MF_00219">
    <property type="entry name" value="PyrC_classII"/>
    <property type="match status" value="1"/>
</dbReference>
<dbReference type="InterPro" id="IPR006680">
    <property type="entry name" value="Amidohydro-rel"/>
</dbReference>
<dbReference type="InterPro" id="IPR004721">
    <property type="entry name" value="DHOdimr"/>
</dbReference>
<dbReference type="InterPro" id="IPR002195">
    <property type="entry name" value="Dihydroorotase_CS"/>
</dbReference>
<dbReference type="InterPro" id="IPR032466">
    <property type="entry name" value="Metal_Hydrolase"/>
</dbReference>
<dbReference type="NCBIfam" id="TIGR00856">
    <property type="entry name" value="pyrC_dimer"/>
    <property type="match status" value="1"/>
</dbReference>
<dbReference type="PANTHER" id="PTHR43137">
    <property type="entry name" value="DIHYDROOROTASE"/>
    <property type="match status" value="1"/>
</dbReference>
<dbReference type="PANTHER" id="PTHR43137:SF1">
    <property type="entry name" value="DIHYDROOROTASE"/>
    <property type="match status" value="1"/>
</dbReference>
<dbReference type="Pfam" id="PF01979">
    <property type="entry name" value="Amidohydro_1"/>
    <property type="match status" value="1"/>
</dbReference>
<dbReference type="PIRSF" id="PIRSF001237">
    <property type="entry name" value="DHOdimr"/>
    <property type="match status" value="1"/>
</dbReference>
<dbReference type="SUPFAM" id="SSF51556">
    <property type="entry name" value="Metallo-dependent hydrolases"/>
    <property type="match status" value="1"/>
</dbReference>
<dbReference type="PROSITE" id="PS00482">
    <property type="entry name" value="DIHYDROOROTASE_1"/>
    <property type="match status" value="1"/>
</dbReference>
<dbReference type="PROSITE" id="PS00483">
    <property type="entry name" value="DIHYDROOROTASE_2"/>
    <property type="match status" value="1"/>
</dbReference>
<evidence type="ECO:0000255" key="1">
    <source>
        <dbReference type="HAMAP-Rule" id="MF_00219"/>
    </source>
</evidence>
<reference key="1">
    <citation type="journal article" date="2001" name="Science">
        <title>The genome of the natural genetic engineer Agrobacterium tumefaciens C58.</title>
        <authorList>
            <person name="Wood D.W."/>
            <person name="Setubal J.C."/>
            <person name="Kaul R."/>
            <person name="Monks D.E."/>
            <person name="Kitajima J.P."/>
            <person name="Okura V.K."/>
            <person name="Zhou Y."/>
            <person name="Chen L."/>
            <person name="Wood G.E."/>
            <person name="Almeida N.F. Jr."/>
            <person name="Woo L."/>
            <person name="Chen Y."/>
            <person name="Paulsen I.T."/>
            <person name="Eisen J.A."/>
            <person name="Karp P.D."/>
            <person name="Bovee D. Sr."/>
            <person name="Chapman P."/>
            <person name="Clendenning J."/>
            <person name="Deatherage G."/>
            <person name="Gillet W."/>
            <person name="Grant C."/>
            <person name="Kutyavin T."/>
            <person name="Levy R."/>
            <person name="Li M.-J."/>
            <person name="McClelland E."/>
            <person name="Palmieri A."/>
            <person name="Raymond C."/>
            <person name="Rouse G."/>
            <person name="Saenphimmachak C."/>
            <person name="Wu Z."/>
            <person name="Romero P."/>
            <person name="Gordon D."/>
            <person name="Zhang S."/>
            <person name="Yoo H."/>
            <person name="Tao Y."/>
            <person name="Biddle P."/>
            <person name="Jung M."/>
            <person name="Krespan W."/>
            <person name="Perry M."/>
            <person name="Gordon-Kamm B."/>
            <person name="Liao L."/>
            <person name="Kim S."/>
            <person name="Hendrick C."/>
            <person name="Zhao Z.-Y."/>
            <person name="Dolan M."/>
            <person name="Chumley F."/>
            <person name="Tingey S.V."/>
            <person name="Tomb J.-F."/>
            <person name="Gordon M.P."/>
            <person name="Olson M.V."/>
            <person name="Nester E.W."/>
        </authorList>
    </citation>
    <scope>NUCLEOTIDE SEQUENCE [LARGE SCALE GENOMIC DNA]</scope>
    <source>
        <strain>C58 / ATCC 33970</strain>
    </source>
</reference>
<reference key="2">
    <citation type="journal article" date="2001" name="Science">
        <title>Genome sequence of the plant pathogen and biotechnology agent Agrobacterium tumefaciens C58.</title>
        <authorList>
            <person name="Goodner B."/>
            <person name="Hinkle G."/>
            <person name="Gattung S."/>
            <person name="Miller N."/>
            <person name="Blanchard M."/>
            <person name="Qurollo B."/>
            <person name="Goldman B.S."/>
            <person name="Cao Y."/>
            <person name="Askenazi M."/>
            <person name="Halling C."/>
            <person name="Mullin L."/>
            <person name="Houmiel K."/>
            <person name="Gordon J."/>
            <person name="Vaudin M."/>
            <person name="Iartchouk O."/>
            <person name="Epp A."/>
            <person name="Liu F."/>
            <person name="Wollam C."/>
            <person name="Allinger M."/>
            <person name="Doughty D."/>
            <person name="Scott C."/>
            <person name="Lappas C."/>
            <person name="Markelz B."/>
            <person name="Flanagan C."/>
            <person name="Crowell C."/>
            <person name="Gurson J."/>
            <person name="Lomo C."/>
            <person name="Sear C."/>
            <person name="Strub G."/>
            <person name="Cielo C."/>
            <person name="Slater S."/>
        </authorList>
    </citation>
    <scope>NUCLEOTIDE SEQUENCE [LARGE SCALE GENOMIC DNA]</scope>
    <source>
        <strain>C58 / ATCC 33970</strain>
    </source>
</reference>
<feature type="chain" id="PRO_0000147202" description="Dihydroorotase">
    <location>
        <begin position="1"/>
        <end position="345"/>
    </location>
</feature>
<feature type="active site" evidence="1">
    <location>
        <position position="247"/>
    </location>
</feature>
<feature type="binding site" evidence="1">
    <location>
        <position position="13"/>
    </location>
    <ligand>
        <name>Zn(2+)</name>
        <dbReference type="ChEBI" id="CHEBI:29105"/>
        <label>1</label>
    </ligand>
</feature>
<feature type="binding site" evidence="1">
    <location>
        <begin position="15"/>
        <end position="17"/>
    </location>
    <ligand>
        <name>substrate</name>
    </ligand>
</feature>
<feature type="binding site" evidence="1">
    <location>
        <position position="15"/>
    </location>
    <ligand>
        <name>Zn(2+)</name>
        <dbReference type="ChEBI" id="CHEBI:29105"/>
        <label>1</label>
    </ligand>
</feature>
<feature type="binding site" evidence="1">
    <location>
        <position position="41"/>
    </location>
    <ligand>
        <name>substrate</name>
    </ligand>
</feature>
<feature type="binding site" description="via carbamate group" evidence="1">
    <location>
        <position position="99"/>
    </location>
    <ligand>
        <name>Zn(2+)</name>
        <dbReference type="ChEBI" id="CHEBI:29105"/>
        <label>1</label>
    </ligand>
</feature>
<feature type="binding site" description="via carbamate group" evidence="1">
    <location>
        <position position="99"/>
    </location>
    <ligand>
        <name>Zn(2+)</name>
        <dbReference type="ChEBI" id="CHEBI:29105"/>
        <label>2</label>
    </ligand>
</feature>
<feature type="binding site" evidence="1">
    <location>
        <position position="136"/>
    </location>
    <ligand>
        <name>substrate</name>
    </ligand>
</feature>
<feature type="binding site" evidence="1">
    <location>
        <position position="136"/>
    </location>
    <ligand>
        <name>Zn(2+)</name>
        <dbReference type="ChEBI" id="CHEBI:29105"/>
        <label>2</label>
    </ligand>
</feature>
<feature type="binding site" evidence="1">
    <location>
        <position position="174"/>
    </location>
    <ligand>
        <name>Zn(2+)</name>
        <dbReference type="ChEBI" id="CHEBI:29105"/>
        <label>2</label>
    </ligand>
</feature>
<feature type="binding site" evidence="1">
    <location>
        <position position="219"/>
    </location>
    <ligand>
        <name>substrate</name>
    </ligand>
</feature>
<feature type="binding site" evidence="1">
    <location>
        <position position="247"/>
    </location>
    <ligand>
        <name>Zn(2+)</name>
        <dbReference type="ChEBI" id="CHEBI:29105"/>
        <label>1</label>
    </ligand>
</feature>
<feature type="binding site" evidence="1">
    <location>
        <position position="251"/>
    </location>
    <ligand>
        <name>substrate</name>
    </ligand>
</feature>
<feature type="binding site" evidence="1">
    <location>
        <position position="263"/>
    </location>
    <ligand>
        <name>substrate</name>
    </ligand>
</feature>
<feature type="modified residue" description="N6-carboxylysine" evidence="1">
    <location>
        <position position="99"/>
    </location>
</feature>
<gene>
    <name evidence="1" type="primary">pyrC</name>
    <name type="ordered locus">Atu0399</name>
    <name type="ORF">AGR_C_703</name>
</gene>